<accession>Q663Q8</accession>
<keyword id="KW-0066">ATP synthesis</keyword>
<keyword id="KW-0067">ATP-binding</keyword>
<keyword id="KW-0997">Cell inner membrane</keyword>
<keyword id="KW-1003">Cell membrane</keyword>
<keyword id="KW-0139">CF(1)</keyword>
<keyword id="KW-0375">Hydrogen ion transport</keyword>
<keyword id="KW-0406">Ion transport</keyword>
<keyword id="KW-0472">Membrane</keyword>
<keyword id="KW-0547">Nucleotide-binding</keyword>
<keyword id="KW-1278">Translocase</keyword>
<keyword id="KW-0813">Transport</keyword>
<name>ATPB_YERPS</name>
<proteinExistence type="inferred from homology"/>
<organism>
    <name type="scientific">Yersinia pseudotuberculosis serotype I (strain IP32953)</name>
    <dbReference type="NCBI Taxonomy" id="273123"/>
    <lineage>
        <taxon>Bacteria</taxon>
        <taxon>Pseudomonadati</taxon>
        <taxon>Pseudomonadota</taxon>
        <taxon>Gammaproteobacteria</taxon>
        <taxon>Enterobacterales</taxon>
        <taxon>Yersiniaceae</taxon>
        <taxon>Yersinia</taxon>
    </lineage>
</organism>
<feature type="chain" id="PRO_0000254436" description="ATP synthase subunit beta">
    <location>
        <begin position="1"/>
        <end position="460"/>
    </location>
</feature>
<feature type="binding site" evidence="1">
    <location>
        <begin position="150"/>
        <end position="157"/>
    </location>
    <ligand>
        <name>ATP</name>
        <dbReference type="ChEBI" id="CHEBI:30616"/>
    </ligand>
</feature>
<protein>
    <recommendedName>
        <fullName evidence="1">ATP synthase subunit beta</fullName>
        <ecNumber evidence="1">7.1.2.2</ecNumber>
    </recommendedName>
    <alternativeName>
        <fullName evidence="1">ATP synthase F1 sector subunit beta</fullName>
    </alternativeName>
    <alternativeName>
        <fullName evidence="1">F-ATPase subunit beta</fullName>
    </alternativeName>
</protein>
<dbReference type="EC" id="7.1.2.2" evidence="1"/>
<dbReference type="EMBL" id="BX936398">
    <property type="protein sequence ID" value="CAH23205.1"/>
    <property type="molecule type" value="Genomic_DNA"/>
</dbReference>
<dbReference type="RefSeq" id="WP_002220753.1">
    <property type="nucleotide sequence ID" value="NZ_CP009712.1"/>
</dbReference>
<dbReference type="SMR" id="Q663Q8"/>
<dbReference type="GeneID" id="57974603"/>
<dbReference type="KEGG" id="ypo:BZ17_2608"/>
<dbReference type="KEGG" id="yps:YPTB3967"/>
<dbReference type="PATRIC" id="fig|273123.14.peg.2734"/>
<dbReference type="Proteomes" id="UP000001011">
    <property type="component" value="Chromosome"/>
</dbReference>
<dbReference type="GO" id="GO:0005886">
    <property type="term" value="C:plasma membrane"/>
    <property type="evidence" value="ECO:0007669"/>
    <property type="project" value="UniProtKB-SubCell"/>
</dbReference>
<dbReference type="GO" id="GO:0045259">
    <property type="term" value="C:proton-transporting ATP synthase complex"/>
    <property type="evidence" value="ECO:0007669"/>
    <property type="project" value="UniProtKB-KW"/>
</dbReference>
<dbReference type="GO" id="GO:0005524">
    <property type="term" value="F:ATP binding"/>
    <property type="evidence" value="ECO:0007669"/>
    <property type="project" value="UniProtKB-UniRule"/>
</dbReference>
<dbReference type="GO" id="GO:0016887">
    <property type="term" value="F:ATP hydrolysis activity"/>
    <property type="evidence" value="ECO:0007669"/>
    <property type="project" value="InterPro"/>
</dbReference>
<dbReference type="GO" id="GO:0046933">
    <property type="term" value="F:proton-transporting ATP synthase activity, rotational mechanism"/>
    <property type="evidence" value="ECO:0007669"/>
    <property type="project" value="UniProtKB-UniRule"/>
</dbReference>
<dbReference type="CDD" id="cd18110">
    <property type="entry name" value="ATP-synt_F1_beta_C"/>
    <property type="match status" value="1"/>
</dbReference>
<dbReference type="CDD" id="cd18115">
    <property type="entry name" value="ATP-synt_F1_beta_N"/>
    <property type="match status" value="1"/>
</dbReference>
<dbReference type="CDD" id="cd01133">
    <property type="entry name" value="F1-ATPase_beta_CD"/>
    <property type="match status" value="1"/>
</dbReference>
<dbReference type="FunFam" id="1.10.1140.10:FF:000001">
    <property type="entry name" value="ATP synthase subunit beta"/>
    <property type="match status" value="1"/>
</dbReference>
<dbReference type="FunFam" id="2.40.10.170:FF:000003">
    <property type="entry name" value="ATP synthase subunit beta"/>
    <property type="match status" value="1"/>
</dbReference>
<dbReference type="FunFam" id="3.40.50.300:FF:000004">
    <property type="entry name" value="ATP synthase subunit beta"/>
    <property type="match status" value="1"/>
</dbReference>
<dbReference type="Gene3D" id="2.40.10.170">
    <property type="match status" value="1"/>
</dbReference>
<dbReference type="Gene3D" id="1.10.1140.10">
    <property type="entry name" value="Bovine Mitochondrial F1-atpase, Atp Synthase Beta Chain, Chain D, domain 3"/>
    <property type="match status" value="1"/>
</dbReference>
<dbReference type="Gene3D" id="3.40.50.300">
    <property type="entry name" value="P-loop containing nucleotide triphosphate hydrolases"/>
    <property type="match status" value="1"/>
</dbReference>
<dbReference type="HAMAP" id="MF_01347">
    <property type="entry name" value="ATP_synth_beta_bact"/>
    <property type="match status" value="1"/>
</dbReference>
<dbReference type="InterPro" id="IPR003593">
    <property type="entry name" value="AAA+_ATPase"/>
</dbReference>
<dbReference type="InterPro" id="IPR055190">
    <property type="entry name" value="ATP-synt_VA_C"/>
</dbReference>
<dbReference type="InterPro" id="IPR005722">
    <property type="entry name" value="ATP_synth_F1_bsu"/>
</dbReference>
<dbReference type="InterPro" id="IPR020003">
    <property type="entry name" value="ATPase_a/bsu_AS"/>
</dbReference>
<dbReference type="InterPro" id="IPR050053">
    <property type="entry name" value="ATPase_alpha/beta_chains"/>
</dbReference>
<dbReference type="InterPro" id="IPR004100">
    <property type="entry name" value="ATPase_F1/V1/A1_a/bsu_N"/>
</dbReference>
<dbReference type="InterPro" id="IPR036121">
    <property type="entry name" value="ATPase_F1/V1/A1_a/bsu_N_sf"/>
</dbReference>
<dbReference type="InterPro" id="IPR000194">
    <property type="entry name" value="ATPase_F1/V1/A1_a/bsu_nucl-bd"/>
</dbReference>
<dbReference type="InterPro" id="IPR024034">
    <property type="entry name" value="ATPase_F1/V1_b/a_C"/>
</dbReference>
<dbReference type="InterPro" id="IPR027417">
    <property type="entry name" value="P-loop_NTPase"/>
</dbReference>
<dbReference type="NCBIfam" id="TIGR01039">
    <property type="entry name" value="atpD"/>
    <property type="match status" value="1"/>
</dbReference>
<dbReference type="PANTHER" id="PTHR15184">
    <property type="entry name" value="ATP SYNTHASE"/>
    <property type="match status" value="1"/>
</dbReference>
<dbReference type="PANTHER" id="PTHR15184:SF71">
    <property type="entry name" value="ATP SYNTHASE SUBUNIT BETA, MITOCHONDRIAL"/>
    <property type="match status" value="1"/>
</dbReference>
<dbReference type="Pfam" id="PF00006">
    <property type="entry name" value="ATP-synt_ab"/>
    <property type="match status" value="1"/>
</dbReference>
<dbReference type="Pfam" id="PF02874">
    <property type="entry name" value="ATP-synt_ab_N"/>
    <property type="match status" value="1"/>
</dbReference>
<dbReference type="Pfam" id="PF22919">
    <property type="entry name" value="ATP-synt_VA_C"/>
    <property type="match status" value="1"/>
</dbReference>
<dbReference type="SMART" id="SM00382">
    <property type="entry name" value="AAA"/>
    <property type="match status" value="1"/>
</dbReference>
<dbReference type="SUPFAM" id="SSF47917">
    <property type="entry name" value="C-terminal domain of alpha and beta subunits of F1 ATP synthase"/>
    <property type="match status" value="1"/>
</dbReference>
<dbReference type="SUPFAM" id="SSF50615">
    <property type="entry name" value="N-terminal domain of alpha and beta subunits of F1 ATP synthase"/>
    <property type="match status" value="1"/>
</dbReference>
<dbReference type="SUPFAM" id="SSF52540">
    <property type="entry name" value="P-loop containing nucleoside triphosphate hydrolases"/>
    <property type="match status" value="1"/>
</dbReference>
<dbReference type="PROSITE" id="PS00152">
    <property type="entry name" value="ATPASE_ALPHA_BETA"/>
    <property type="match status" value="1"/>
</dbReference>
<reference key="1">
    <citation type="journal article" date="2004" name="Proc. Natl. Acad. Sci. U.S.A.">
        <title>Insights into the evolution of Yersinia pestis through whole-genome comparison with Yersinia pseudotuberculosis.</title>
        <authorList>
            <person name="Chain P.S.G."/>
            <person name="Carniel E."/>
            <person name="Larimer F.W."/>
            <person name="Lamerdin J."/>
            <person name="Stoutland P.O."/>
            <person name="Regala W.M."/>
            <person name="Georgescu A.M."/>
            <person name="Vergez L.M."/>
            <person name="Land M.L."/>
            <person name="Motin V.L."/>
            <person name="Brubaker R.R."/>
            <person name="Fowler J."/>
            <person name="Hinnebusch J."/>
            <person name="Marceau M."/>
            <person name="Medigue C."/>
            <person name="Simonet M."/>
            <person name="Chenal-Francisque V."/>
            <person name="Souza B."/>
            <person name="Dacheux D."/>
            <person name="Elliott J.M."/>
            <person name="Derbise A."/>
            <person name="Hauser L.J."/>
            <person name="Garcia E."/>
        </authorList>
    </citation>
    <scope>NUCLEOTIDE SEQUENCE [LARGE SCALE GENOMIC DNA]</scope>
    <source>
        <strain>IP32953</strain>
    </source>
</reference>
<evidence type="ECO:0000255" key="1">
    <source>
        <dbReference type="HAMAP-Rule" id="MF_01347"/>
    </source>
</evidence>
<comment type="function">
    <text evidence="1">Produces ATP from ADP in the presence of a proton gradient across the membrane. The catalytic sites are hosted primarily by the beta subunits.</text>
</comment>
<comment type="catalytic activity">
    <reaction evidence="1">
        <text>ATP + H2O + 4 H(+)(in) = ADP + phosphate + 5 H(+)(out)</text>
        <dbReference type="Rhea" id="RHEA:57720"/>
        <dbReference type="ChEBI" id="CHEBI:15377"/>
        <dbReference type="ChEBI" id="CHEBI:15378"/>
        <dbReference type="ChEBI" id="CHEBI:30616"/>
        <dbReference type="ChEBI" id="CHEBI:43474"/>
        <dbReference type="ChEBI" id="CHEBI:456216"/>
        <dbReference type="EC" id="7.1.2.2"/>
    </reaction>
</comment>
<comment type="subunit">
    <text evidence="1">F-type ATPases have 2 components, CF(1) - the catalytic core - and CF(0) - the membrane proton channel. CF(1) has five subunits: alpha(3), beta(3), gamma(1), delta(1), epsilon(1). CF(0) has three main subunits: a(1), b(2) and c(9-12). The alpha and beta chains form an alternating ring which encloses part of the gamma chain. CF(1) is attached to CF(0) by a central stalk formed by the gamma and epsilon chains, while a peripheral stalk is formed by the delta and b chains.</text>
</comment>
<comment type="subcellular location">
    <subcellularLocation>
        <location evidence="1">Cell inner membrane</location>
        <topology evidence="1">Peripheral membrane protein</topology>
    </subcellularLocation>
</comment>
<comment type="similarity">
    <text evidence="1">Belongs to the ATPase alpha/beta chains family.</text>
</comment>
<sequence>MATGKIIQVIGAVVDVEFPQDAVPKVYNALEVEGTTEKLVLEVQQQLGGGVVRCIAMGSSDGLSRGLKVTNLEHPIEVPVGKATLGRIMNVLGEPIDMKGPIGEEERWAIHREAPSYEELASSQDLLETGIKVMDLICPFAKGGKVGLFGGAGVGKTVNMMELIRNIAIEHSGYSVFAGVGERTREGNDFYHEMTDSNVLDKVSLVYGQMNEPPGNRLRVALTGLTMAEKFRDEGRDVLLFIDNIYRYTLAGTEVSALLGRMPSAVGYQPTLAEEMGVLQERITSTKTGSITSVQAVYVPADDLTDPSPATTFAHLDATVVLSRQIASLGIYPAVDPLDSTSRQLDPLVVGQEHYDVARGVQSILQRYQELKDIIAILGMDELSEDDKLVVSRARKIQRFLSQPFFVAEVFTGSPGKFVSLKDTIRGFKGIMNGDYDHLPEQAFYMVGTIEEAVEKAKKL</sequence>
<gene>
    <name evidence="1" type="primary">atpD</name>
    <name type="ordered locus">YPTB3967</name>
</gene>